<dbReference type="EMBL" id="AJ720100">
    <property type="protein sequence ID" value="CAG31759.1"/>
    <property type="molecule type" value="mRNA"/>
</dbReference>
<dbReference type="RefSeq" id="NP_001026433.1">
    <property type="nucleotide sequence ID" value="NM_001031262.1"/>
</dbReference>
<dbReference type="SMR" id="Q5ZKI4"/>
<dbReference type="FunCoup" id="Q5ZKI4">
    <property type="interactions" value="873"/>
</dbReference>
<dbReference type="STRING" id="9031.ENSGALP00000019790"/>
<dbReference type="PaxDb" id="9031-ENSGALP00000019790"/>
<dbReference type="GeneID" id="424277"/>
<dbReference type="KEGG" id="gga:424277"/>
<dbReference type="CTD" id="54520"/>
<dbReference type="VEuPathDB" id="HostDB:geneid_424277"/>
<dbReference type="eggNOG" id="KOG2701">
    <property type="taxonomic scope" value="Eukaryota"/>
</dbReference>
<dbReference type="InParanoid" id="Q5ZKI4"/>
<dbReference type="OrthoDB" id="16092at2759"/>
<dbReference type="PhylomeDB" id="Q5ZKI4"/>
<dbReference type="PRO" id="PR:Q5ZKI4"/>
<dbReference type="Proteomes" id="UP000000539">
    <property type="component" value="Unassembled WGS sequence"/>
</dbReference>
<dbReference type="GO" id="GO:0005769">
    <property type="term" value="C:early endosome"/>
    <property type="evidence" value="ECO:0007669"/>
    <property type="project" value="UniProtKB-SubCell"/>
</dbReference>
<dbReference type="GO" id="GO:0006893">
    <property type="term" value="P:Golgi to plasma membrane transport"/>
    <property type="evidence" value="ECO:0000318"/>
    <property type="project" value="GO_Central"/>
</dbReference>
<dbReference type="GO" id="GO:0015031">
    <property type="term" value="P:protein transport"/>
    <property type="evidence" value="ECO:0007669"/>
    <property type="project" value="UniProtKB-KW"/>
</dbReference>
<dbReference type="InterPro" id="IPR039116">
    <property type="entry name" value="CCDC93"/>
</dbReference>
<dbReference type="InterPro" id="IPR019159">
    <property type="entry name" value="CCDC93_CC"/>
</dbReference>
<dbReference type="InterPro" id="IPR048747">
    <property type="entry name" value="CCDC93_N"/>
</dbReference>
<dbReference type="PANTHER" id="PTHR16441:SF0">
    <property type="entry name" value="COILED-COIL DOMAIN-CONTAINING PROTEIN 93"/>
    <property type="match status" value="1"/>
</dbReference>
<dbReference type="PANTHER" id="PTHR16441">
    <property type="entry name" value="FIDIPIDINE"/>
    <property type="match status" value="1"/>
</dbReference>
<dbReference type="Pfam" id="PF09762">
    <property type="entry name" value="CCDC93_CC"/>
    <property type="match status" value="1"/>
</dbReference>
<dbReference type="Pfam" id="PF21673">
    <property type="entry name" value="CCDC93_N"/>
    <property type="match status" value="1"/>
</dbReference>
<protein>
    <recommendedName>
        <fullName>Coiled-coil domain-containing protein 93</fullName>
    </recommendedName>
</protein>
<keyword id="KW-0175">Coiled coil</keyword>
<keyword id="KW-0967">Endosome</keyword>
<keyword id="KW-0653">Protein transport</keyword>
<keyword id="KW-1185">Reference proteome</keyword>
<keyword id="KW-0813">Transport</keyword>
<feature type="chain" id="PRO_0000234607" description="Coiled-coil domain-containing protein 93">
    <location>
        <begin position="1"/>
        <end position="617"/>
    </location>
</feature>
<feature type="region of interest" description="Disordered" evidence="3">
    <location>
        <begin position="1"/>
        <end position="20"/>
    </location>
</feature>
<feature type="coiled-coil region" evidence="2">
    <location>
        <begin position="285"/>
        <end position="474"/>
    </location>
</feature>
<feature type="coiled-coil region" evidence="2">
    <location>
        <begin position="546"/>
        <end position="614"/>
    </location>
</feature>
<feature type="compositionally biased region" description="Basic and acidic residues" evidence="3">
    <location>
        <begin position="1"/>
        <end position="16"/>
    </location>
</feature>
<name>CCD93_CHICK</name>
<reference key="1">
    <citation type="journal article" date="2005" name="Genome Biol.">
        <title>Full-length cDNAs from chicken bursal lymphocytes to facilitate gene function analysis.</title>
        <authorList>
            <person name="Caldwell R.B."/>
            <person name="Kierzek A.M."/>
            <person name="Arakawa H."/>
            <person name="Bezzubov Y."/>
            <person name="Zaim J."/>
            <person name="Fiedler P."/>
            <person name="Kutter S."/>
            <person name="Blagodatski A."/>
            <person name="Kostovska D."/>
            <person name="Koter M."/>
            <person name="Plachy J."/>
            <person name="Carninci P."/>
            <person name="Hayashizaki Y."/>
            <person name="Buerstedde J.-M."/>
        </authorList>
    </citation>
    <scope>NUCLEOTIDE SEQUENCE [LARGE SCALE MRNA]</scope>
    <source>
        <strain>CB</strain>
        <tissue>Bursa of Fabricius</tissue>
    </source>
</reference>
<gene>
    <name type="primary">CCDC93</name>
    <name type="ORF">RCJMB04_10i21</name>
</gene>
<accession>Q5ZKI4</accession>
<proteinExistence type="evidence at transcript level"/>
<comment type="function">
    <text evidence="1">May be involved in copper-dependent ATP7A trafficking between the trans-Golgi network and vesicles in the cell periphery.</text>
</comment>
<comment type="subcellular location">
    <subcellularLocation>
        <location evidence="1">Early endosome</location>
    </subcellularLocation>
</comment>
<comment type="similarity">
    <text evidence="4">Belongs to the CCDC93 family.</text>
</comment>
<sequence length="617" mass="71719">MVVPRGQEHRAPQEVETREDEEQNIKLTEILELLVAAGYFRARIKGLSPFDKVVGGMTWCITTCNFDIDIDLLFQENSTIGQKIALTEKIVSVLPKMKCPHRLEPHQIQGLDFIHIFPVVQWLVKRAIETREEMGDYIRSYSISQFQKTHRLPEDDEFMQRKEKAIKTVTDIFEVYKPQRKYKRQKGAEEILDEESKVHATLLEYGRRYGFSRQAGKTEQTEDKKIVLPSGLAAAGKAEPCDEDDLRAAEELRIKTLMTGMAAMATEEGKLTASTVGQIVGLQSDEIKQIVSEYAEKQSELSAEERPERLGAAQQHRRKVASLNKQILQKTKLLEELQAKFVDLQAKCTEAKKTLTEVESYSEKLDKELAALETIESQADSSVLQNLRMLVAINENLKSQEQEFKAHCREEMERLQQDIENLKAEAAENGEEEEPNKLIDQQYQTEKEKLQKIRLLLARRNREIAILQRKIDEVPSRAELTQYQKRFIELYSQVSATHKETKQFFTLYNTLDDKKVYLEKEVNLLNSIHDNFHQAMASSGSREQFLRQMEQIVEGIKQNRMKMEKKKQENKMRRDQLNDEYLELLEKQRLYFKTVKEFKEECRKNEMLLSKLKASSS</sequence>
<evidence type="ECO:0000250" key="1">
    <source>
        <dbReference type="UniProtKB" id="Q567U6"/>
    </source>
</evidence>
<evidence type="ECO:0000255" key="2"/>
<evidence type="ECO:0000256" key="3">
    <source>
        <dbReference type="SAM" id="MobiDB-lite"/>
    </source>
</evidence>
<evidence type="ECO:0000305" key="4"/>
<organism>
    <name type="scientific">Gallus gallus</name>
    <name type="common">Chicken</name>
    <dbReference type="NCBI Taxonomy" id="9031"/>
    <lineage>
        <taxon>Eukaryota</taxon>
        <taxon>Metazoa</taxon>
        <taxon>Chordata</taxon>
        <taxon>Craniata</taxon>
        <taxon>Vertebrata</taxon>
        <taxon>Euteleostomi</taxon>
        <taxon>Archelosauria</taxon>
        <taxon>Archosauria</taxon>
        <taxon>Dinosauria</taxon>
        <taxon>Saurischia</taxon>
        <taxon>Theropoda</taxon>
        <taxon>Coelurosauria</taxon>
        <taxon>Aves</taxon>
        <taxon>Neognathae</taxon>
        <taxon>Galloanserae</taxon>
        <taxon>Galliformes</taxon>
        <taxon>Phasianidae</taxon>
        <taxon>Phasianinae</taxon>
        <taxon>Gallus</taxon>
    </lineage>
</organism>